<protein>
    <recommendedName>
        <fullName evidence="1">2,3-bisphosphoglycerate-independent phosphoglycerate mutase</fullName>
        <shortName evidence="1">BPG-independent PGAM</shortName>
        <shortName evidence="1">Phosphoglyceromutase</shortName>
        <shortName evidence="1">aPGAM</shortName>
        <ecNumber evidence="1">5.4.2.12</ecNumber>
    </recommendedName>
</protein>
<evidence type="ECO:0000255" key="1">
    <source>
        <dbReference type="HAMAP-Rule" id="MF_01402"/>
    </source>
</evidence>
<keyword id="KW-0324">Glycolysis</keyword>
<keyword id="KW-0413">Isomerase</keyword>
<keyword id="KW-1185">Reference proteome</keyword>
<gene>
    <name evidence="1" type="primary">apgM</name>
    <name type="ordered locus">Msed_2238</name>
</gene>
<accession>A4YIX4</accession>
<dbReference type="EC" id="5.4.2.12" evidence="1"/>
<dbReference type="EMBL" id="CP000682">
    <property type="protein sequence ID" value="ABP96376.1"/>
    <property type="molecule type" value="Genomic_DNA"/>
</dbReference>
<dbReference type="RefSeq" id="WP_012022163.1">
    <property type="nucleotide sequence ID" value="NC_009440.1"/>
</dbReference>
<dbReference type="SMR" id="A4YIX4"/>
<dbReference type="STRING" id="399549.Msed_2238"/>
<dbReference type="GeneID" id="91756783"/>
<dbReference type="KEGG" id="mse:Msed_2238"/>
<dbReference type="eggNOG" id="arCOG01696">
    <property type="taxonomic scope" value="Archaea"/>
</dbReference>
<dbReference type="HOGENOM" id="CLU_034906_2_0_2"/>
<dbReference type="UniPathway" id="UPA00109">
    <property type="reaction ID" value="UER00186"/>
</dbReference>
<dbReference type="Proteomes" id="UP000000242">
    <property type="component" value="Chromosome"/>
</dbReference>
<dbReference type="GO" id="GO:0046872">
    <property type="term" value="F:metal ion binding"/>
    <property type="evidence" value="ECO:0007669"/>
    <property type="project" value="InterPro"/>
</dbReference>
<dbReference type="GO" id="GO:0004619">
    <property type="term" value="F:phosphoglycerate mutase activity"/>
    <property type="evidence" value="ECO:0007669"/>
    <property type="project" value="UniProtKB-EC"/>
</dbReference>
<dbReference type="GO" id="GO:0006096">
    <property type="term" value="P:glycolytic process"/>
    <property type="evidence" value="ECO:0007669"/>
    <property type="project" value="UniProtKB-UniRule"/>
</dbReference>
<dbReference type="CDD" id="cd16011">
    <property type="entry name" value="iPGM_like"/>
    <property type="match status" value="1"/>
</dbReference>
<dbReference type="Gene3D" id="3.40.720.10">
    <property type="entry name" value="Alkaline Phosphatase, subunit A"/>
    <property type="match status" value="2"/>
</dbReference>
<dbReference type="HAMAP" id="MF_01402_A">
    <property type="entry name" value="ApgM_A"/>
    <property type="match status" value="1"/>
</dbReference>
<dbReference type="InterPro" id="IPR017850">
    <property type="entry name" value="Alkaline_phosphatase_core_sf"/>
</dbReference>
<dbReference type="InterPro" id="IPR023665">
    <property type="entry name" value="ApgAM_prokaryotes"/>
</dbReference>
<dbReference type="InterPro" id="IPR006124">
    <property type="entry name" value="Metalloenzyme"/>
</dbReference>
<dbReference type="InterPro" id="IPR004456">
    <property type="entry name" value="Pglycerate_mutase_ApgM"/>
</dbReference>
<dbReference type="NCBIfam" id="TIGR00306">
    <property type="entry name" value="apgM"/>
    <property type="match status" value="1"/>
</dbReference>
<dbReference type="NCBIfam" id="NF003104">
    <property type="entry name" value="PRK04024.1"/>
    <property type="match status" value="1"/>
</dbReference>
<dbReference type="PANTHER" id="PTHR31209">
    <property type="entry name" value="COFACTOR-INDEPENDENT PHOSPHOGLYCERATE MUTASE"/>
    <property type="match status" value="1"/>
</dbReference>
<dbReference type="PANTHER" id="PTHR31209:SF0">
    <property type="entry name" value="METALLOENZYME DOMAIN-CONTAINING PROTEIN"/>
    <property type="match status" value="1"/>
</dbReference>
<dbReference type="Pfam" id="PF01676">
    <property type="entry name" value="Metalloenzyme"/>
    <property type="match status" value="1"/>
</dbReference>
<dbReference type="Pfam" id="PF10143">
    <property type="entry name" value="PhosphMutase"/>
    <property type="match status" value="1"/>
</dbReference>
<dbReference type="PIRSF" id="PIRSF006392">
    <property type="entry name" value="IPGAM_arch"/>
    <property type="match status" value="1"/>
</dbReference>
<dbReference type="SUPFAM" id="SSF53649">
    <property type="entry name" value="Alkaline phosphatase-like"/>
    <property type="match status" value="1"/>
</dbReference>
<reference key="1">
    <citation type="journal article" date="2008" name="Appl. Environ. Microbiol.">
        <title>The genome sequence of the metal-mobilizing, extremely thermoacidophilic archaeon Metallosphaera sedula provides insights into bioleaching-associated metabolism.</title>
        <authorList>
            <person name="Auernik K.S."/>
            <person name="Maezato Y."/>
            <person name="Blum P.H."/>
            <person name="Kelly R.M."/>
        </authorList>
    </citation>
    <scope>NUCLEOTIDE SEQUENCE [LARGE SCALE GENOMIC DNA]</scope>
    <source>
        <strain>ATCC 51363 / DSM 5348 / JCM 9185 / NBRC 15509 / TH2</strain>
    </source>
</reference>
<sequence>MKKYKILLVIGDGLGDRQVASLNGRTPLENADKPTIASLLRSSLVGLMDPIGPGIVPGSDTSHLAIFGLDPKKYYKGRGSFEALGAGAILTEGDIAFRGNFATVDSNLVVIDRRAGRKIEEAEDLVKELNDKIQEIDGVKVRFYHGTEHRVSVVLSGDNLSDKVSDTDPHEVGKRILNSEPTDDALSSKRTANIINALTRRIYEVLSNSQLNDKRVREGLPPANIVLLRGASIHTELPKLKDYTGLSGAAVSATALIKGVCKSLGMEVVTPPGATGGIDTDYMAKAEAAAKLLEDHDLVFLHIKATDAASHDGKVSEKVKAIEMIDRSIGRVLDRYGSELVVLFTGDHATPVELREHSGDPVPLMLYVPTNIIPDNVGDFNERQARKGSLKITGLNIIDLLLNFSNRATKYGA</sequence>
<comment type="function">
    <text evidence="1">Catalyzes the interconversion of 2-phosphoglycerate and 3-phosphoglycerate.</text>
</comment>
<comment type="catalytic activity">
    <reaction evidence="1">
        <text>(2R)-2-phosphoglycerate = (2R)-3-phosphoglycerate</text>
        <dbReference type="Rhea" id="RHEA:15901"/>
        <dbReference type="ChEBI" id="CHEBI:58272"/>
        <dbReference type="ChEBI" id="CHEBI:58289"/>
        <dbReference type="EC" id="5.4.2.12"/>
    </reaction>
</comment>
<comment type="pathway">
    <text evidence="1">Carbohydrate degradation; glycolysis; pyruvate from D-glyceraldehyde 3-phosphate: step 3/5.</text>
</comment>
<comment type="similarity">
    <text evidence="1">Belongs to the BPG-independent phosphoglycerate mutase family. A-PGAM subfamily.</text>
</comment>
<proteinExistence type="inferred from homology"/>
<organism>
    <name type="scientific">Metallosphaera sedula (strain ATCC 51363 / DSM 5348 / JCM 9185 / NBRC 15509 / TH2)</name>
    <dbReference type="NCBI Taxonomy" id="399549"/>
    <lineage>
        <taxon>Archaea</taxon>
        <taxon>Thermoproteota</taxon>
        <taxon>Thermoprotei</taxon>
        <taxon>Sulfolobales</taxon>
        <taxon>Sulfolobaceae</taxon>
        <taxon>Metallosphaera</taxon>
    </lineage>
</organism>
<feature type="chain" id="PRO_1000073505" description="2,3-bisphosphoglycerate-independent phosphoglycerate mutase">
    <location>
        <begin position="1"/>
        <end position="413"/>
    </location>
</feature>
<name>APGM_METS5</name>